<sequence length="380" mass="42588">MTPLRKTNPLMKLINHSLIDLPAPSNISMWWNFGSLLGACLILQIVTGLFLAMHYTPDASTAFSSVAHITRDVNYGWIIRYLHANGASMFFICLFLHIGRGLYYGSFLYLETWNVGIILLLATMATALMGYVLPWGQMSFWGATVITNLLSAVPYIGTDLVQWVWGGYSVDNATLTRFFTFHFILPFIITALAALHLLFLHETGSNNPLGISSQPDKIAFHPYYTVKDILGLFLLLLMLMSLVLFSPDLLGDPDNYTQANPLNTPPHIKPEWYFLFAYAILRSVPNKLGGVLALLLSILILAMIPALHTAKQQSMMFRPLSQLTYWLLVMNLLTLTWIGGQPVSYPFITIGQVASVLYFTTILVLMPAASLIENKMLKWT</sequence>
<organism>
    <name type="scientific">Hylobates muelleri</name>
    <name type="common">Mueller's Bornean gibbon</name>
    <dbReference type="NCBI Taxonomy" id="9588"/>
    <lineage>
        <taxon>Eukaryota</taxon>
        <taxon>Metazoa</taxon>
        <taxon>Chordata</taxon>
        <taxon>Craniata</taxon>
        <taxon>Vertebrata</taxon>
        <taxon>Euteleostomi</taxon>
        <taxon>Mammalia</taxon>
        <taxon>Eutheria</taxon>
        <taxon>Euarchontoglires</taxon>
        <taxon>Primates</taxon>
        <taxon>Haplorrhini</taxon>
        <taxon>Catarrhini</taxon>
        <taxon>Hylobatidae</taxon>
        <taxon>Hylobates</taxon>
    </lineage>
</organism>
<reference key="1">
    <citation type="journal article" date="1998" name="Mol. Phylogenet. Evol.">
        <title>Evolution of the gibbon subgenera inferred from cytochrome b DNA sequence data.</title>
        <authorList>
            <person name="Hall L.M."/>
            <person name="Jones D.S."/>
            <person name="Wood B.A."/>
        </authorList>
    </citation>
    <scope>NUCLEOTIDE SEQUENCE [GENOMIC DNA]</scope>
</reference>
<evidence type="ECO:0000250" key="1"/>
<evidence type="ECO:0000250" key="2">
    <source>
        <dbReference type="UniProtKB" id="P00157"/>
    </source>
</evidence>
<evidence type="ECO:0000255" key="3">
    <source>
        <dbReference type="PROSITE-ProRule" id="PRU00967"/>
    </source>
</evidence>
<evidence type="ECO:0000255" key="4">
    <source>
        <dbReference type="PROSITE-ProRule" id="PRU00968"/>
    </source>
</evidence>
<accession>O47893</accession>
<keyword id="KW-0249">Electron transport</keyword>
<keyword id="KW-0349">Heme</keyword>
<keyword id="KW-0408">Iron</keyword>
<keyword id="KW-0472">Membrane</keyword>
<keyword id="KW-0479">Metal-binding</keyword>
<keyword id="KW-0496">Mitochondrion</keyword>
<keyword id="KW-0999">Mitochondrion inner membrane</keyword>
<keyword id="KW-0679">Respiratory chain</keyword>
<keyword id="KW-0812">Transmembrane</keyword>
<keyword id="KW-1133">Transmembrane helix</keyword>
<keyword id="KW-0813">Transport</keyword>
<keyword id="KW-0830">Ubiquinone</keyword>
<feature type="chain" id="PRO_0000061054" description="Cytochrome b">
    <location>
        <begin position="1"/>
        <end position="380"/>
    </location>
</feature>
<feature type="transmembrane region" description="Helical" evidence="2">
    <location>
        <begin position="33"/>
        <end position="53"/>
    </location>
</feature>
<feature type="transmembrane region" description="Helical" evidence="2">
    <location>
        <begin position="77"/>
        <end position="98"/>
    </location>
</feature>
<feature type="transmembrane region" description="Helical" evidence="2">
    <location>
        <begin position="113"/>
        <end position="133"/>
    </location>
</feature>
<feature type="transmembrane region" description="Helical" evidence="2">
    <location>
        <begin position="178"/>
        <end position="198"/>
    </location>
</feature>
<feature type="transmembrane region" description="Helical" evidence="2">
    <location>
        <begin position="226"/>
        <end position="246"/>
    </location>
</feature>
<feature type="transmembrane region" description="Helical" evidence="2">
    <location>
        <begin position="288"/>
        <end position="308"/>
    </location>
</feature>
<feature type="transmembrane region" description="Helical" evidence="2">
    <location>
        <begin position="320"/>
        <end position="340"/>
    </location>
</feature>
<feature type="transmembrane region" description="Helical" evidence="2">
    <location>
        <begin position="347"/>
        <end position="367"/>
    </location>
</feature>
<feature type="binding site" description="axial binding residue" evidence="2">
    <location>
        <position position="83"/>
    </location>
    <ligand>
        <name>heme b</name>
        <dbReference type="ChEBI" id="CHEBI:60344"/>
        <label>b562</label>
    </ligand>
    <ligandPart>
        <name>Fe</name>
        <dbReference type="ChEBI" id="CHEBI:18248"/>
    </ligandPart>
</feature>
<feature type="binding site" description="axial binding residue" evidence="2">
    <location>
        <position position="97"/>
    </location>
    <ligand>
        <name>heme b</name>
        <dbReference type="ChEBI" id="CHEBI:60344"/>
        <label>b566</label>
    </ligand>
    <ligandPart>
        <name>Fe</name>
        <dbReference type="ChEBI" id="CHEBI:18248"/>
    </ligandPart>
</feature>
<feature type="binding site" description="axial binding residue" evidence="2">
    <location>
        <position position="182"/>
    </location>
    <ligand>
        <name>heme b</name>
        <dbReference type="ChEBI" id="CHEBI:60344"/>
        <label>b562</label>
    </ligand>
    <ligandPart>
        <name>Fe</name>
        <dbReference type="ChEBI" id="CHEBI:18248"/>
    </ligandPart>
</feature>
<feature type="binding site" description="axial binding residue" evidence="2">
    <location>
        <position position="196"/>
    </location>
    <ligand>
        <name>heme b</name>
        <dbReference type="ChEBI" id="CHEBI:60344"/>
        <label>b566</label>
    </ligand>
    <ligandPart>
        <name>Fe</name>
        <dbReference type="ChEBI" id="CHEBI:18248"/>
    </ligandPart>
</feature>
<feature type="binding site" evidence="2">
    <location>
        <position position="201"/>
    </location>
    <ligand>
        <name>a ubiquinone</name>
        <dbReference type="ChEBI" id="CHEBI:16389"/>
    </ligand>
</feature>
<dbReference type="EMBL" id="Y13300">
    <property type="protein sequence ID" value="CAA73736.1"/>
    <property type="molecule type" value="Genomic_DNA"/>
</dbReference>
<dbReference type="SMR" id="O47893"/>
<dbReference type="GO" id="GO:0005743">
    <property type="term" value="C:mitochondrial inner membrane"/>
    <property type="evidence" value="ECO:0007669"/>
    <property type="project" value="UniProtKB-SubCell"/>
</dbReference>
<dbReference type="GO" id="GO:0045275">
    <property type="term" value="C:respiratory chain complex III"/>
    <property type="evidence" value="ECO:0007669"/>
    <property type="project" value="InterPro"/>
</dbReference>
<dbReference type="GO" id="GO:0046872">
    <property type="term" value="F:metal ion binding"/>
    <property type="evidence" value="ECO:0007669"/>
    <property type="project" value="UniProtKB-KW"/>
</dbReference>
<dbReference type="GO" id="GO:0008121">
    <property type="term" value="F:ubiquinol-cytochrome-c reductase activity"/>
    <property type="evidence" value="ECO:0007669"/>
    <property type="project" value="InterPro"/>
</dbReference>
<dbReference type="GO" id="GO:0006122">
    <property type="term" value="P:mitochondrial electron transport, ubiquinol to cytochrome c"/>
    <property type="evidence" value="ECO:0007669"/>
    <property type="project" value="TreeGrafter"/>
</dbReference>
<dbReference type="CDD" id="cd00290">
    <property type="entry name" value="cytochrome_b_C"/>
    <property type="match status" value="1"/>
</dbReference>
<dbReference type="CDD" id="cd00284">
    <property type="entry name" value="Cytochrome_b_N"/>
    <property type="match status" value="1"/>
</dbReference>
<dbReference type="FunFam" id="1.20.810.10:FF:000002">
    <property type="entry name" value="Cytochrome b"/>
    <property type="match status" value="1"/>
</dbReference>
<dbReference type="Gene3D" id="1.20.810.10">
    <property type="entry name" value="Cytochrome Bc1 Complex, Chain C"/>
    <property type="match status" value="1"/>
</dbReference>
<dbReference type="InterPro" id="IPR005798">
    <property type="entry name" value="Cyt_b/b6_C"/>
</dbReference>
<dbReference type="InterPro" id="IPR036150">
    <property type="entry name" value="Cyt_b/b6_C_sf"/>
</dbReference>
<dbReference type="InterPro" id="IPR005797">
    <property type="entry name" value="Cyt_b/b6_N"/>
</dbReference>
<dbReference type="InterPro" id="IPR027387">
    <property type="entry name" value="Cytb/b6-like_sf"/>
</dbReference>
<dbReference type="InterPro" id="IPR030689">
    <property type="entry name" value="Cytochrome_b"/>
</dbReference>
<dbReference type="InterPro" id="IPR048260">
    <property type="entry name" value="Cytochrome_b_C_euk/bac"/>
</dbReference>
<dbReference type="InterPro" id="IPR048259">
    <property type="entry name" value="Cytochrome_b_N_euk/bac"/>
</dbReference>
<dbReference type="InterPro" id="IPR016174">
    <property type="entry name" value="Di-haem_cyt_TM"/>
</dbReference>
<dbReference type="PANTHER" id="PTHR19271">
    <property type="entry name" value="CYTOCHROME B"/>
    <property type="match status" value="1"/>
</dbReference>
<dbReference type="PANTHER" id="PTHR19271:SF16">
    <property type="entry name" value="CYTOCHROME B"/>
    <property type="match status" value="1"/>
</dbReference>
<dbReference type="Pfam" id="PF00032">
    <property type="entry name" value="Cytochrom_B_C"/>
    <property type="match status" value="1"/>
</dbReference>
<dbReference type="Pfam" id="PF00033">
    <property type="entry name" value="Cytochrome_B"/>
    <property type="match status" value="1"/>
</dbReference>
<dbReference type="PIRSF" id="PIRSF038885">
    <property type="entry name" value="COB"/>
    <property type="match status" value="1"/>
</dbReference>
<dbReference type="SUPFAM" id="SSF81648">
    <property type="entry name" value="a domain/subunit of cytochrome bc1 complex (Ubiquinol-cytochrome c reductase)"/>
    <property type="match status" value="1"/>
</dbReference>
<dbReference type="SUPFAM" id="SSF81342">
    <property type="entry name" value="Transmembrane di-heme cytochromes"/>
    <property type="match status" value="1"/>
</dbReference>
<dbReference type="PROSITE" id="PS51003">
    <property type="entry name" value="CYTB_CTER"/>
    <property type="match status" value="1"/>
</dbReference>
<dbReference type="PROSITE" id="PS51002">
    <property type="entry name" value="CYTB_NTER"/>
    <property type="match status" value="1"/>
</dbReference>
<proteinExistence type="inferred from homology"/>
<gene>
    <name type="primary">MT-CYB</name>
    <name type="synonym">COB</name>
    <name type="synonym">CYTB</name>
    <name type="synonym">MTCYB</name>
</gene>
<geneLocation type="mitochondrion"/>
<name>CYB_HYLME</name>
<protein>
    <recommendedName>
        <fullName>Cytochrome b</fullName>
    </recommendedName>
    <alternativeName>
        <fullName>Complex III subunit 3</fullName>
    </alternativeName>
    <alternativeName>
        <fullName>Complex III subunit III</fullName>
    </alternativeName>
    <alternativeName>
        <fullName>Cytochrome b-c1 complex subunit 3</fullName>
    </alternativeName>
    <alternativeName>
        <fullName>Ubiquinol-cytochrome-c reductase complex cytochrome b subunit</fullName>
    </alternativeName>
</protein>
<comment type="function">
    <text evidence="2">Component of the ubiquinol-cytochrome c reductase complex (complex III or cytochrome b-c1 complex) that is part of the mitochondrial respiratory chain. The b-c1 complex mediates electron transfer from ubiquinol to cytochrome c. Contributes to the generation of a proton gradient across the mitochondrial membrane that is then used for ATP synthesis.</text>
</comment>
<comment type="cofactor">
    <cofactor evidence="2">
        <name>heme b</name>
        <dbReference type="ChEBI" id="CHEBI:60344"/>
    </cofactor>
    <text evidence="2">Binds 2 heme b groups non-covalently.</text>
</comment>
<comment type="subunit">
    <text evidence="2">The cytochrome bc1 complex contains 11 subunits: 3 respiratory subunits (MT-CYB, CYC1 and UQCRFS1), 2 core proteins (UQCRC1 and UQCRC2) and 6 low-molecular weight proteins (UQCRH/QCR6, UQCRB/QCR7, UQCRQ/QCR8, UQCR10/QCR9, UQCR11/QCR10 and a cleavage product of UQCRFS1). This cytochrome bc1 complex then forms a dimer.</text>
</comment>
<comment type="subcellular location">
    <subcellularLocation>
        <location evidence="2">Mitochondrion inner membrane</location>
        <topology evidence="2">Multi-pass membrane protein</topology>
    </subcellularLocation>
</comment>
<comment type="miscellaneous">
    <text evidence="1">Heme 1 (or BL or b562) is low-potential and absorbs at about 562 nm, and heme 2 (or BH or b566) is high-potential and absorbs at about 566 nm.</text>
</comment>
<comment type="similarity">
    <text evidence="3 4">Belongs to the cytochrome b family.</text>
</comment>
<comment type="caution">
    <text evidence="2">The full-length protein contains only eight transmembrane helices, not nine as predicted by bioinformatics tools.</text>
</comment>